<gene>
    <name evidence="1" type="primary">moaA</name>
    <name type="ordered locus">TK2225</name>
</gene>
<comment type="function">
    <text evidence="1">Catalyzes the cyclization of GTP to (8S)-3',8-cyclo-7,8-dihydroguanosine 5'-triphosphate.</text>
</comment>
<comment type="catalytic activity">
    <reaction evidence="1">
        <text>GTP + AH2 + S-adenosyl-L-methionine = (8S)-3',8-cyclo-7,8-dihydroguanosine 5'-triphosphate + 5'-deoxyadenosine + L-methionine + A + H(+)</text>
        <dbReference type="Rhea" id="RHEA:49576"/>
        <dbReference type="ChEBI" id="CHEBI:13193"/>
        <dbReference type="ChEBI" id="CHEBI:15378"/>
        <dbReference type="ChEBI" id="CHEBI:17319"/>
        <dbReference type="ChEBI" id="CHEBI:17499"/>
        <dbReference type="ChEBI" id="CHEBI:37565"/>
        <dbReference type="ChEBI" id="CHEBI:57844"/>
        <dbReference type="ChEBI" id="CHEBI:59789"/>
        <dbReference type="ChEBI" id="CHEBI:131766"/>
        <dbReference type="EC" id="4.1.99.22"/>
    </reaction>
</comment>
<comment type="cofactor">
    <cofactor evidence="1">
        <name>[4Fe-4S] cluster</name>
        <dbReference type="ChEBI" id="CHEBI:49883"/>
    </cofactor>
    <text evidence="1">Binds 2 [4Fe-4S] clusters. Binds 1 [4Fe-4S] cluster coordinated with 3 cysteines and an exchangeable S-adenosyl-L-methionine and 1 [4Fe-4S] cluster coordinated with 3 cysteines and the GTP-derived substrate.</text>
</comment>
<comment type="pathway">
    <text evidence="1">Cofactor biosynthesis; molybdopterin biosynthesis.</text>
</comment>
<comment type="similarity">
    <text evidence="1">Belongs to the radical SAM superfamily. MoaA family.</text>
</comment>
<accession>Q5JHN5</accession>
<evidence type="ECO:0000255" key="1">
    <source>
        <dbReference type="HAMAP-Rule" id="MF_01225"/>
    </source>
</evidence>
<evidence type="ECO:0000255" key="2">
    <source>
        <dbReference type="PROSITE-ProRule" id="PRU01266"/>
    </source>
</evidence>
<protein>
    <recommendedName>
        <fullName evidence="1">Probable GTP 3',8-cyclase</fullName>
        <ecNumber evidence="1">4.1.99.22</ecNumber>
    </recommendedName>
    <alternativeName>
        <fullName evidence="1">Molybdenum cofactor biosynthesis protein A</fullName>
    </alternativeName>
</protein>
<keyword id="KW-0004">4Fe-4S</keyword>
<keyword id="KW-0342">GTP-binding</keyword>
<keyword id="KW-0408">Iron</keyword>
<keyword id="KW-0411">Iron-sulfur</keyword>
<keyword id="KW-0456">Lyase</keyword>
<keyword id="KW-0479">Metal-binding</keyword>
<keyword id="KW-0501">Molybdenum cofactor biosynthesis</keyword>
<keyword id="KW-0547">Nucleotide-binding</keyword>
<keyword id="KW-1185">Reference proteome</keyword>
<keyword id="KW-0949">S-adenosyl-L-methionine</keyword>
<feature type="chain" id="PRO_0000153026" description="Probable GTP 3',8-cyclase">
    <location>
        <begin position="1"/>
        <end position="307"/>
    </location>
</feature>
<feature type="domain" description="Radical SAM core" evidence="2">
    <location>
        <begin position="5"/>
        <end position="231"/>
    </location>
</feature>
<feature type="binding site" evidence="1">
    <location>
        <position position="14"/>
    </location>
    <ligand>
        <name>GTP</name>
        <dbReference type="ChEBI" id="CHEBI:37565"/>
    </ligand>
</feature>
<feature type="binding site" evidence="1">
    <location>
        <position position="21"/>
    </location>
    <ligand>
        <name>[4Fe-4S] cluster</name>
        <dbReference type="ChEBI" id="CHEBI:49883"/>
        <label>1</label>
        <note>4Fe-4S-S-AdoMet</note>
    </ligand>
</feature>
<feature type="binding site" evidence="1">
    <location>
        <position position="25"/>
    </location>
    <ligand>
        <name>[4Fe-4S] cluster</name>
        <dbReference type="ChEBI" id="CHEBI:49883"/>
        <label>1</label>
        <note>4Fe-4S-S-AdoMet</note>
    </ligand>
</feature>
<feature type="binding site" evidence="1">
    <location>
        <position position="28"/>
    </location>
    <ligand>
        <name>[4Fe-4S] cluster</name>
        <dbReference type="ChEBI" id="CHEBI:49883"/>
        <label>1</label>
        <note>4Fe-4S-S-AdoMet</note>
    </ligand>
</feature>
<feature type="binding site" evidence="1">
    <location>
        <position position="62"/>
    </location>
    <ligand>
        <name>GTP</name>
        <dbReference type="ChEBI" id="CHEBI:37565"/>
    </ligand>
</feature>
<feature type="binding site" evidence="1">
    <location>
        <position position="66"/>
    </location>
    <ligand>
        <name>S-adenosyl-L-methionine</name>
        <dbReference type="ChEBI" id="CHEBI:59789"/>
    </ligand>
</feature>
<feature type="binding site" evidence="1">
    <location>
        <position position="91"/>
    </location>
    <ligand>
        <name>GTP</name>
        <dbReference type="ChEBI" id="CHEBI:37565"/>
    </ligand>
</feature>
<feature type="binding site" evidence="1">
    <location>
        <position position="115"/>
    </location>
    <ligand>
        <name>S-adenosyl-L-methionine</name>
        <dbReference type="ChEBI" id="CHEBI:59789"/>
    </ligand>
</feature>
<feature type="binding site" evidence="1">
    <location>
        <position position="151"/>
    </location>
    <ligand>
        <name>GTP</name>
        <dbReference type="ChEBI" id="CHEBI:37565"/>
    </ligand>
</feature>
<feature type="binding site" evidence="1">
    <location>
        <position position="190"/>
    </location>
    <ligand>
        <name>S-adenosyl-L-methionine</name>
        <dbReference type="ChEBI" id="CHEBI:59789"/>
    </ligand>
</feature>
<feature type="binding site" evidence="1">
    <location>
        <position position="251"/>
    </location>
    <ligand>
        <name>[4Fe-4S] cluster</name>
        <dbReference type="ChEBI" id="CHEBI:49883"/>
        <label>2</label>
        <note>4Fe-4S-substrate</note>
    </ligand>
</feature>
<feature type="binding site" evidence="1">
    <location>
        <position position="254"/>
    </location>
    <ligand>
        <name>[4Fe-4S] cluster</name>
        <dbReference type="ChEBI" id="CHEBI:49883"/>
        <label>2</label>
        <note>4Fe-4S-substrate</note>
    </ligand>
</feature>
<feature type="binding site" evidence="1">
    <location>
        <begin position="256"/>
        <end position="258"/>
    </location>
    <ligand>
        <name>GTP</name>
        <dbReference type="ChEBI" id="CHEBI:37565"/>
    </ligand>
</feature>
<feature type="binding site" evidence="1">
    <location>
        <position position="268"/>
    </location>
    <ligand>
        <name>[4Fe-4S] cluster</name>
        <dbReference type="ChEBI" id="CHEBI:49883"/>
        <label>2</label>
        <note>4Fe-4S-substrate</note>
    </ligand>
</feature>
<reference key="1">
    <citation type="journal article" date="2005" name="Genome Res.">
        <title>Complete genome sequence of the hyperthermophilic archaeon Thermococcus kodakaraensis KOD1 and comparison with Pyrococcus genomes.</title>
        <authorList>
            <person name="Fukui T."/>
            <person name="Atomi H."/>
            <person name="Kanai T."/>
            <person name="Matsumi R."/>
            <person name="Fujiwara S."/>
            <person name="Imanaka T."/>
        </authorList>
    </citation>
    <scope>NUCLEOTIDE SEQUENCE [LARGE SCALE GENOMIC DNA]</scope>
    <source>
        <strain>ATCC BAA-918 / JCM 12380 / KOD1</strain>
    </source>
</reference>
<sequence length="307" mass="35529">MLYDRFGRPVTNLRISLTQECNYRCFFCHREGQRFLAKNELTPEEIERLVRIASRLGIRKVKLTGGEPTVREDILEIVKRIKPYVIDLSMTTNGSRLKELAKPLAKAGLDRVNVSLHSLKPEVYKRITGVDGLEAVLEGIEEAVKYLSPVKLNMTVMKGLNDGEIWDMVEFAAKTGTILQLIELEAPREMAETAFFRKYFYPLKPVEEKLEKLAVETKERRMHRRKKYFIPTDYGIAEVEVVRAMHNTVFCANCTRLRVTSDGKFKTCLLRNNDLIDFLSAMRNGASDEEIVEIFKRAVLMREPYWK</sequence>
<organism>
    <name type="scientific">Thermococcus kodakarensis (strain ATCC BAA-918 / JCM 12380 / KOD1)</name>
    <name type="common">Pyrococcus kodakaraensis (strain KOD1)</name>
    <dbReference type="NCBI Taxonomy" id="69014"/>
    <lineage>
        <taxon>Archaea</taxon>
        <taxon>Methanobacteriati</taxon>
        <taxon>Methanobacteriota</taxon>
        <taxon>Thermococci</taxon>
        <taxon>Thermococcales</taxon>
        <taxon>Thermococcaceae</taxon>
        <taxon>Thermococcus</taxon>
    </lineage>
</organism>
<proteinExistence type="inferred from homology"/>
<dbReference type="EC" id="4.1.99.22" evidence="1"/>
<dbReference type="EMBL" id="AP006878">
    <property type="protein sequence ID" value="BAD86414.1"/>
    <property type="molecule type" value="Genomic_DNA"/>
</dbReference>
<dbReference type="RefSeq" id="WP_011251175.1">
    <property type="nucleotide sequence ID" value="NC_006624.1"/>
</dbReference>
<dbReference type="SMR" id="Q5JHN5"/>
<dbReference type="FunCoup" id="Q5JHN5">
    <property type="interactions" value="94"/>
</dbReference>
<dbReference type="IntAct" id="Q5JHN5">
    <property type="interactions" value="1"/>
</dbReference>
<dbReference type="MINT" id="Q5JHN5"/>
<dbReference type="STRING" id="69014.TK2225"/>
<dbReference type="EnsemblBacteria" id="BAD86414">
    <property type="protein sequence ID" value="BAD86414"/>
    <property type="gene ID" value="TK2225"/>
</dbReference>
<dbReference type="GeneID" id="78448765"/>
<dbReference type="KEGG" id="tko:TK2225"/>
<dbReference type="PATRIC" id="fig|69014.16.peg.2180"/>
<dbReference type="eggNOG" id="arCOG00930">
    <property type="taxonomic scope" value="Archaea"/>
</dbReference>
<dbReference type="HOGENOM" id="CLU_009273_0_1_2"/>
<dbReference type="InParanoid" id="Q5JHN5"/>
<dbReference type="OrthoDB" id="6925at2157"/>
<dbReference type="PhylomeDB" id="Q5JHN5"/>
<dbReference type="UniPathway" id="UPA00344"/>
<dbReference type="Proteomes" id="UP000000536">
    <property type="component" value="Chromosome"/>
</dbReference>
<dbReference type="GO" id="GO:0051539">
    <property type="term" value="F:4 iron, 4 sulfur cluster binding"/>
    <property type="evidence" value="ECO:0007669"/>
    <property type="project" value="UniProtKB-UniRule"/>
</dbReference>
<dbReference type="GO" id="GO:0061799">
    <property type="term" value="F:cyclic pyranopterin monophosphate synthase activity"/>
    <property type="evidence" value="ECO:0000318"/>
    <property type="project" value="GO_Central"/>
</dbReference>
<dbReference type="GO" id="GO:0061798">
    <property type="term" value="F:GTP 3',8'-cyclase activity"/>
    <property type="evidence" value="ECO:0000318"/>
    <property type="project" value="GO_Central"/>
</dbReference>
<dbReference type="GO" id="GO:0005525">
    <property type="term" value="F:GTP binding"/>
    <property type="evidence" value="ECO:0007669"/>
    <property type="project" value="UniProtKB-UniRule"/>
</dbReference>
<dbReference type="GO" id="GO:0046872">
    <property type="term" value="F:metal ion binding"/>
    <property type="evidence" value="ECO:0007669"/>
    <property type="project" value="UniProtKB-KW"/>
</dbReference>
<dbReference type="GO" id="GO:1904047">
    <property type="term" value="F:S-adenosyl-L-methionine binding"/>
    <property type="evidence" value="ECO:0007669"/>
    <property type="project" value="UniProtKB-UniRule"/>
</dbReference>
<dbReference type="GO" id="GO:0006777">
    <property type="term" value="P:Mo-molybdopterin cofactor biosynthetic process"/>
    <property type="evidence" value="ECO:0000318"/>
    <property type="project" value="GO_Central"/>
</dbReference>
<dbReference type="CDD" id="cd01335">
    <property type="entry name" value="Radical_SAM"/>
    <property type="match status" value="1"/>
</dbReference>
<dbReference type="CDD" id="cd21117">
    <property type="entry name" value="Twitch_MoaA"/>
    <property type="match status" value="1"/>
</dbReference>
<dbReference type="Gene3D" id="3.20.20.70">
    <property type="entry name" value="Aldolase class I"/>
    <property type="match status" value="1"/>
</dbReference>
<dbReference type="HAMAP" id="MF_01225_A">
    <property type="entry name" value="MoaA_A"/>
    <property type="match status" value="1"/>
</dbReference>
<dbReference type="InterPro" id="IPR013785">
    <property type="entry name" value="Aldolase_TIM"/>
</dbReference>
<dbReference type="InterPro" id="IPR006638">
    <property type="entry name" value="Elp3/MiaA/NifB-like_rSAM"/>
</dbReference>
<dbReference type="InterPro" id="IPR013485">
    <property type="entry name" value="MoaA_arc"/>
</dbReference>
<dbReference type="InterPro" id="IPR010505">
    <property type="entry name" value="MoaA_twitch"/>
</dbReference>
<dbReference type="InterPro" id="IPR050105">
    <property type="entry name" value="MoCo_biosynth_MoaA/MoaC"/>
</dbReference>
<dbReference type="InterPro" id="IPR007197">
    <property type="entry name" value="rSAM"/>
</dbReference>
<dbReference type="NCBIfam" id="TIGR02668">
    <property type="entry name" value="moaA_archaeal"/>
    <property type="match status" value="1"/>
</dbReference>
<dbReference type="NCBIfam" id="NF001199">
    <property type="entry name" value="PRK00164.2-1"/>
    <property type="match status" value="1"/>
</dbReference>
<dbReference type="PANTHER" id="PTHR22960:SF0">
    <property type="entry name" value="MOLYBDENUM COFACTOR BIOSYNTHESIS PROTEIN 1"/>
    <property type="match status" value="1"/>
</dbReference>
<dbReference type="PANTHER" id="PTHR22960">
    <property type="entry name" value="MOLYBDOPTERIN COFACTOR SYNTHESIS PROTEIN A"/>
    <property type="match status" value="1"/>
</dbReference>
<dbReference type="Pfam" id="PF13353">
    <property type="entry name" value="Fer4_12"/>
    <property type="match status" value="1"/>
</dbReference>
<dbReference type="Pfam" id="PF06463">
    <property type="entry name" value="Mob_synth_C"/>
    <property type="match status" value="1"/>
</dbReference>
<dbReference type="Pfam" id="PF04055">
    <property type="entry name" value="Radical_SAM"/>
    <property type="match status" value="1"/>
</dbReference>
<dbReference type="SFLD" id="SFLDG01383">
    <property type="entry name" value="cyclic_pyranopterin_phosphate"/>
    <property type="match status" value="1"/>
</dbReference>
<dbReference type="SFLD" id="SFLDS00029">
    <property type="entry name" value="Radical_SAM"/>
    <property type="match status" value="1"/>
</dbReference>
<dbReference type="SMART" id="SM00729">
    <property type="entry name" value="Elp3"/>
    <property type="match status" value="1"/>
</dbReference>
<dbReference type="SUPFAM" id="SSF102114">
    <property type="entry name" value="Radical SAM enzymes"/>
    <property type="match status" value="1"/>
</dbReference>
<dbReference type="PROSITE" id="PS51918">
    <property type="entry name" value="RADICAL_SAM"/>
    <property type="match status" value="1"/>
</dbReference>
<name>MOAA_THEKO</name>